<organism>
    <name type="scientific">Saccharomyces cerevisiae (strain ATCC 204508 / S288c)</name>
    <name type="common">Baker's yeast</name>
    <dbReference type="NCBI Taxonomy" id="559292"/>
    <lineage>
        <taxon>Eukaryota</taxon>
        <taxon>Fungi</taxon>
        <taxon>Dikarya</taxon>
        <taxon>Ascomycota</taxon>
        <taxon>Saccharomycotina</taxon>
        <taxon>Saccharomycetes</taxon>
        <taxon>Saccharomycetales</taxon>
        <taxon>Saccharomycetaceae</taxon>
        <taxon>Saccharomyces</taxon>
    </lineage>
</organism>
<feature type="chain" id="PRO_0000203336" description="Uncharacterized protein YMR244W">
    <location>
        <begin position="1"/>
        <end position="355"/>
    </location>
</feature>
<feature type="transmembrane region" description="Helical" evidence="1">
    <location>
        <begin position="6"/>
        <end position="26"/>
    </location>
</feature>
<evidence type="ECO:0000255" key="1"/>
<evidence type="ECO:0000305" key="2"/>
<sequence length="355" mass="37383">MVLCKLLTPYFLLSILSVGVFTATAAPSPSIQMTENTNQDHHEHAKRGGTCAFPNYDGMVAVQKGGSNGGWAMSPDQECSYGSWCPYACKPGQLMGQWDPSATTYSYPKCQNGGLYCDSNGNLQKPNSDKDYCYDGKGTVIAKNNANSGDVAFCQTVLPGNEAMLIPTLVGSGSKQTLAVPGTDYWASSASHYYVNAPGVSVEDACQWGSSANPQGNWAPFVAGSNMDDNQNTFVKIGWNPVYLESSCPFKNVKPSFGIRITCDDESQCEGLPCSIDPSSNGVNEVTSSGGGSSGAGGGNFCVVTARNGAKANIEVFDVGSGSSSKGKRELNPLDVITTTVTETKYKTVTVTAKT</sequence>
<name>YM79_YEAST</name>
<gene>
    <name type="ordered locus">YMR244W</name>
    <name type="ORF">YM9408.06</name>
</gene>
<protein>
    <recommendedName>
        <fullName>Uncharacterized protein YMR244W</fullName>
    </recommendedName>
</protein>
<dbReference type="EMBL" id="Z48756">
    <property type="protein sequence ID" value="CAA88654.1"/>
    <property type="molecule type" value="Genomic_DNA"/>
</dbReference>
<dbReference type="EMBL" id="BK006946">
    <property type="protein sequence ID" value="DAA10145.1"/>
    <property type="molecule type" value="Genomic_DNA"/>
</dbReference>
<dbReference type="PIR" id="S56058">
    <property type="entry name" value="S56058"/>
</dbReference>
<dbReference type="RefSeq" id="NP_013971.1">
    <property type="nucleotide sequence ID" value="NM_001182752.1"/>
</dbReference>
<dbReference type="BioGRID" id="35423">
    <property type="interactions" value="72"/>
</dbReference>
<dbReference type="DIP" id="DIP-5317N"/>
<dbReference type="FunCoup" id="Q04018">
    <property type="interactions" value="31"/>
</dbReference>
<dbReference type="IntAct" id="Q04018">
    <property type="interactions" value="2"/>
</dbReference>
<dbReference type="MINT" id="Q04018"/>
<dbReference type="STRING" id="4932.YMR244W"/>
<dbReference type="PaxDb" id="4932-YMR244W"/>
<dbReference type="EnsemblFungi" id="YMR244W_mRNA">
    <property type="protein sequence ID" value="YMR244W"/>
    <property type="gene ID" value="YMR244W"/>
</dbReference>
<dbReference type="GeneID" id="855285"/>
<dbReference type="KEGG" id="sce:YMR244W"/>
<dbReference type="AGR" id="SGD:S000004858"/>
<dbReference type="SGD" id="S000004858">
    <property type="gene designation" value="YMR244W"/>
</dbReference>
<dbReference type="VEuPathDB" id="FungiDB:YMR244W"/>
<dbReference type="eggNOG" id="ENOG502QWHV">
    <property type="taxonomic scope" value="Eukaryota"/>
</dbReference>
<dbReference type="HOGENOM" id="CLU_026108_0_0_1"/>
<dbReference type="InParanoid" id="Q04018"/>
<dbReference type="OMA" id="NVAFCQT"/>
<dbReference type="OrthoDB" id="5554151at2759"/>
<dbReference type="BioCyc" id="YEAST:G3O-32925-MONOMER"/>
<dbReference type="BioGRID-ORCS" id="855285">
    <property type="hits" value="0 hits in 10 CRISPR screens"/>
</dbReference>
<dbReference type="PRO" id="PR:Q04018"/>
<dbReference type="Proteomes" id="UP000002311">
    <property type="component" value="Chromosome XIII"/>
</dbReference>
<dbReference type="RNAct" id="Q04018">
    <property type="molecule type" value="protein"/>
</dbReference>
<dbReference type="GO" id="GO:0000324">
    <property type="term" value="C:fungal-type vacuole"/>
    <property type="evidence" value="ECO:0007005"/>
    <property type="project" value="SGD"/>
</dbReference>
<dbReference type="GO" id="GO:0016020">
    <property type="term" value="C:membrane"/>
    <property type="evidence" value="ECO:0007669"/>
    <property type="project" value="UniProtKB-SubCell"/>
</dbReference>
<dbReference type="InterPro" id="IPR053088">
    <property type="entry name" value="Beta-glucosidase/SUN-like"/>
</dbReference>
<dbReference type="InterPro" id="IPR005556">
    <property type="entry name" value="SUN"/>
</dbReference>
<dbReference type="PANTHER" id="PTHR31654">
    <property type="entry name" value="SECRETED BETA-GLUCOSIDASE ADG3-RELATED"/>
    <property type="match status" value="1"/>
</dbReference>
<dbReference type="PANTHER" id="PTHR31654:SF0">
    <property type="entry name" value="SECRETED BETA-GLUCOSIDASE ADG3-RELATED"/>
    <property type="match status" value="1"/>
</dbReference>
<dbReference type="Pfam" id="PF03856">
    <property type="entry name" value="SUN"/>
    <property type="match status" value="1"/>
</dbReference>
<comment type="subcellular location">
    <subcellularLocation>
        <location evidence="2">Membrane</location>
        <topology evidence="2">Single-pass membrane protein</topology>
    </subcellularLocation>
</comment>
<comment type="similarity">
    <text evidence="2">Belongs to the SUN family.</text>
</comment>
<reference key="1">
    <citation type="journal article" date="1997" name="Nature">
        <title>The nucleotide sequence of Saccharomyces cerevisiae chromosome XIII.</title>
        <authorList>
            <person name="Bowman S."/>
            <person name="Churcher C.M."/>
            <person name="Badcock K."/>
            <person name="Brown D."/>
            <person name="Chillingworth T."/>
            <person name="Connor R."/>
            <person name="Dedman K."/>
            <person name="Devlin K."/>
            <person name="Gentles S."/>
            <person name="Hamlin N."/>
            <person name="Hunt S."/>
            <person name="Jagels K."/>
            <person name="Lye G."/>
            <person name="Moule S."/>
            <person name="Odell C."/>
            <person name="Pearson D."/>
            <person name="Rajandream M.A."/>
            <person name="Rice P."/>
            <person name="Skelton J."/>
            <person name="Walsh S.V."/>
            <person name="Whitehead S."/>
            <person name="Barrell B.G."/>
        </authorList>
    </citation>
    <scope>NUCLEOTIDE SEQUENCE [LARGE SCALE GENOMIC DNA]</scope>
    <source>
        <strain>ATCC 204508 / S288c</strain>
    </source>
</reference>
<reference key="2">
    <citation type="journal article" date="2014" name="G3 (Bethesda)">
        <title>The reference genome sequence of Saccharomyces cerevisiae: Then and now.</title>
        <authorList>
            <person name="Engel S.R."/>
            <person name="Dietrich F.S."/>
            <person name="Fisk D.G."/>
            <person name="Binkley G."/>
            <person name="Balakrishnan R."/>
            <person name="Costanzo M.C."/>
            <person name="Dwight S.S."/>
            <person name="Hitz B.C."/>
            <person name="Karra K."/>
            <person name="Nash R.S."/>
            <person name="Weng S."/>
            <person name="Wong E.D."/>
            <person name="Lloyd P."/>
            <person name="Skrzypek M.S."/>
            <person name="Miyasato S.R."/>
            <person name="Simison M."/>
            <person name="Cherry J.M."/>
        </authorList>
    </citation>
    <scope>GENOME REANNOTATION</scope>
    <source>
        <strain>ATCC 204508 / S288c</strain>
    </source>
</reference>
<accession>Q04018</accession>
<accession>D6W071</accession>
<keyword id="KW-0472">Membrane</keyword>
<keyword id="KW-1185">Reference proteome</keyword>
<keyword id="KW-0812">Transmembrane</keyword>
<keyword id="KW-1133">Transmembrane helix</keyword>
<proteinExistence type="inferred from homology"/>